<evidence type="ECO:0000250" key="1"/>
<evidence type="ECO:0000255" key="2">
    <source>
        <dbReference type="HAMAP-Rule" id="MF_00118"/>
    </source>
</evidence>
<comment type="function">
    <text evidence="2">GTP hydrolase that promotes the GTP-dependent binding of aminoacyl-tRNA to the A-site of ribosomes during protein biosynthesis.</text>
</comment>
<comment type="catalytic activity">
    <reaction evidence="2">
        <text>GTP + H2O = GDP + phosphate + H(+)</text>
        <dbReference type="Rhea" id="RHEA:19669"/>
        <dbReference type="ChEBI" id="CHEBI:15377"/>
        <dbReference type="ChEBI" id="CHEBI:15378"/>
        <dbReference type="ChEBI" id="CHEBI:37565"/>
        <dbReference type="ChEBI" id="CHEBI:43474"/>
        <dbReference type="ChEBI" id="CHEBI:58189"/>
        <dbReference type="EC" id="3.6.5.3"/>
    </reaction>
    <physiologicalReaction direction="left-to-right" evidence="2">
        <dbReference type="Rhea" id="RHEA:19670"/>
    </physiologicalReaction>
</comment>
<comment type="subunit">
    <text evidence="2">Monomer.</text>
</comment>
<comment type="subcellular location">
    <subcellularLocation>
        <location evidence="2">Cytoplasm</location>
    </subcellularLocation>
</comment>
<comment type="PTM">
    <text evidence="1">Phosphorylated on serine and/or threonine residue(s). Dephosphorylated by stp (By similarity).</text>
</comment>
<comment type="similarity">
    <text evidence="2">Belongs to the TRAFAC class translation factor GTPase superfamily. Classic translation factor GTPase family. EF-Tu/EF-1A subfamily.</text>
</comment>
<sequence length="395" mass="43342">MAKEKFDRSKPHVNIGTIGHVDHGKTTLTAAITTVLAKKGYADAQAYDQIDGAPEERERGITISTAHVEYQTDSRHYAHVDCPGHADYVKNMITGAAQMDGAILVVSAADGPMPQTREHILLSRQVGVPYIVVFMNKCDMVDDEELLELVEMEIRDLLTEYEFPGDDIPVIKGSALKALQGEADWEAKIDELMEAVDSYIPTPERDTDKPFMMPVEDVFSITGRGTVATGRVERGQVKVGDEVEVIGIEEESKKVVVTGVEMFRKLLDYAEAGDNIGALLRGVAREDIQRGQVLAKPGSITPHTNFKAETYVLTKEEGGRHTPFFNNYRPQFYFRTTDVTGIVTLPEGTEMVMPGDNIELAVELIAPIAIEDGTKFSIREGGRTVGAGVVSNISK</sequence>
<name>EFTU_LISW6</name>
<reference key="1">
    <citation type="journal article" date="2006" name="J. Bacteriol.">
        <title>Whole-genome sequence of Listeria welshimeri reveals common steps in genome reduction with Listeria innocua as compared to Listeria monocytogenes.</title>
        <authorList>
            <person name="Hain T."/>
            <person name="Steinweg C."/>
            <person name="Kuenne C.T."/>
            <person name="Billion A."/>
            <person name="Ghai R."/>
            <person name="Chatterjee S.S."/>
            <person name="Domann E."/>
            <person name="Kaerst U."/>
            <person name="Goesmann A."/>
            <person name="Bekel T."/>
            <person name="Bartels D."/>
            <person name="Kaiser O."/>
            <person name="Meyer F."/>
            <person name="Puehler A."/>
            <person name="Weisshaar B."/>
            <person name="Wehland J."/>
            <person name="Liang C."/>
            <person name="Dandekar T."/>
            <person name="Lampidis R."/>
            <person name="Kreft J."/>
            <person name="Goebel W."/>
            <person name="Chakraborty T."/>
        </authorList>
    </citation>
    <scope>NUCLEOTIDE SEQUENCE [LARGE SCALE GENOMIC DNA]</scope>
    <source>
        <strain>ATCC 35897 / DSM 20650 / CCUG 15529 / CIP 8149 / NCTC 11857 / SLCC 5334 / V8</strain>
    </source>
</reference>
<accession>A0ALY8</accession>
<keyword id="KW-0963">Cytoplasm</keyword>
<keyword id="KW-0251">Elongation factor</keyword>
<keyword id="KW-0342">GTP-binding</keyword>
<keyword id="KW-0378">Hydrolase</keyword>
<keyword id="KW-0460">Magnesium</keyword>
<keyword id="KW-0479">Metal-binding</keyword>
<keyword id="KW-0547">Nucleotide-binding</keyword>
<keyword id="KW-0597">Phosphoprotein</keyword>
<keyword id="KW-0648">Protein biosynthesis</keyword>
<dbReference type="EC" id="3.6.5.3" evidence="2"/>
<dbReference type="EMBL" id="AM263198">
    <property type="protein sequence ID" value="CAK22020.1"/>
    <property type="molecule type" value="Genomic_DNA"/>
</dbReference>
<dbReference type="RefSeq" id="WP_003723640.1">
    <property type="nucleotide sequence ID" value="NC_008555.1"/>
</dbReference>
<dbReference type="SMR" id="A0ALY8"/>
<dbReference type="STRING" id="386043.lwe2602"/>
<dbReference type="GeneID" id="61190526"/>
<dbReference type="KEGG" id="lwe:lwe2602"/>
<dbReference type="eggNOG" id="COG0050">
    <property type="taxonomic scope" value="Bacteria"/>
</dbReference>
<dbReference type="HOGENOM" id="CLU_007265_0_0_9"/>
<dbReference type="OrthoDB" id="9804504at2"/>
<dbReference type="Proteomes" id="UP000000779">
    <property type="component" value="Chromosome"/>
</dbReference>
<dbReference type="GO" id="GO:0005829">
    <property type="term" value="C:cytosol"/>
    <property type="evidence" value="ECO:0007669"/>
    <property type="project" value="TreeGrafter"/>
</dbReference>
<dbReference type="GO" id="GO:0005525">
    <property type="term" value="F:GTP binding"/>
    <property type="evidence" value="ECO:0007669"/>
    <property type="project" value="UniProtKB-UniRule"/>
</dbReference>
<dbReference type="GO" id="GO:0003924">
    <property type="term" value="F:GTPase activity"/>
    <property type="evidence" value="ECO:0007669"/>
    <property type="project" value="InterPro"/>
</dbReference>
<dbReference type="GO" id="GO:0003746">
    <property type="term" value="F:translation elongation factor activity"/>
    <property type="evidence" value="ECO:0007669"/>
    <property type="project" value="UniProtKB-UniRule"/>
</dbReference>
<dbReference type="CDD" id="cd01884">
    <property type="entry name" value="EF_Tu"/>
    <property type="match status" value="1"/>
</dbReference>
<dbReference type="CDD" id="cd03697">
    <property type="entry name" value="EFTU_II"/>
    <property type="match status" value="1"/>
</dbReference>
<dbReference type="CDD" id="cd03707">
    <property type="entry name" value="EFTU_III"/>
    <property type="match status" value="1"/>
</dbReference>
<dbReference type="FunFam" id="2.40.30.10:FF:000001">
    <property type="entry name" value="Elongation factor Tu"/>
    <property type="match status" value="1"/>
</dbReference>
<dbReference type="FunFam" id="3.40.50.300:FF:000003">
    <property type="entry name" value="Elongation factor Tu"/>
    <property type="match status" value="1"/>
</dbReference>
<dbReference type="Gene3D" id="3.40.50.300">
    <property type="entry name" value="P-loop containing nucleotide triphosphate hydrolases"/>
    <property type="match status" value="1"/>
</dbReference>
<dbReference type="Gene3D" id="2.40.30.10">
    <property type="entry name" value="Translation factors"/>
    <property type="match status" value="2"/>
</dbReference>
<dbReference type="HAMAP" id="MF_00118_B">
    <property type="entry name" value="EF_Tu_B"/>
    <property type="match status" value="1"/>
</dbReference>
<dbReference type="InterPro" id="IPR041709">
    <property type="entry name" value="EF-Tu_GTP-bd"/>
</dbReference>
<dbReference type="InterPro" id="IPR050055">
    <property type="entry name" value="EF-Tu_GTPase"/>
</dbReference>
<dbReference type="InterPro" id="IPR004161">
    <property type="entry name" value="EFTu-like_2"/>
</dbReference>
<dbReference type="InterPro" id="IPR033720">
    <property type="entry name" value="EFTU_2"/>
</dbReference>
<dbReference type="InterPro" id="IPR031157">
    <property type="entry name" value="G_TR_CS"/>
</dbReference>
<dbReference type="InterPro" id="IPR027417">
    <property type="entry name" value="P-loop_NTPase"/>
</dbReference>
<dbReference type="InterPro" id="IPR005225">
    <property type="entry name" value="Small_GTP-bd"/>
</dbReference>
<dbReference type="InterPro" id="IPR000795">
    <property type="entry name" value="T_Tr_GTP-bd_dom"/>
</dbReference>
<dbReference type="InterPro" id="IPR009000">
    <property type="entry name" value="Transl_B-barrel_sf"/>
</dbReference>
<dbReference type="InterPro" id="IPR009001">
    <property type="entry name" value="Transl_elong_EF1A/Init_IF2_C"/>
</dbReference>
<dbReference type="InterPro" id="IPR004541">
    <property type="entry name" value="Transl_elong_EFTu/EF1A_bac/org"/>
</dbReference>
<dbReference type="InterPro" id="IPR004160">
    <property type="entry name" value="Transl_elong_EFTu/EF1A_C"/>
</dbReference>
<dbReference type="NCBIfam" id="TIGR00485">
    <property type="entry name" value="EF-Tu"/>
    <property type="match status" value="1"/>
</dbReference>
<dbReference type="NCBIfam" id="NF000766">
    <property type="entry name" value="PRK00049.1"/>
    <property type="match status" value="1"/>
</dbReference>
<dbReference type="NCBIfam" id="NF009372">
    <property type="entry name" value="PRK12735.1"/>
    <property type="match status" value="1"/>
</dbReference>
<dbReference type="NCBIfam" id="NF009373">
    <property type="entry name" value="PRK12736.1"/>
    <property type="match status" value="1"/>
</dbReference>
<dbReference type="NCBIfam" id="TIGR00231">
    <property type="entry name" value="small_GTP"/>
    <property type="match status" value="1"/>
</dbReference>
<dbReference type="PANTHER" id="PTHR43721:SF22">
    <property type="entry name" value="ELONGATION FACTOR TU, MITOCHONDRIAL"/>
    <property type="match status" value="1"/>
</dbReference>
<dbReference type="PANTHER" id="PTHR43721">
    <property type="entry name" value="ELONGATION FACTOR TU-RELATED"/>
    <property type="match status" value="1"/>
</dbReference>
<dbReference type="Pfam" id="PF00009">
    <property type="entry name" value="GTP_EFTU"/>
    <property type="match status" value="1"/>
</dbReference>
<dbReference type="Pfam" id="PF03144">
    <property type="entry name" value="GTP_EFTU_D2"/>
    <property type="match status" value="1"/>
</dbReference>
<dbReference type="Pfam" id="PF03143">
    <property type="entry name" value="GTP_EFTU_D3"/>
    <property type="match status" value="1"/>
</dbReference>
<dbReference type="PRINTS" id="PR00315">
    <property type="entry name" value="ELONGATNFCT"/>
</dbReference>
<dbReference type="SUPFAM" id="SSF50465">
    <property type="entry name" value="EF-Tu/eEF-1alpha/eIF2-gamma C-terminal domain"/>
    <property type="match status" value="1"/>
</dbReference>
<dbReference type="SUPFAM" id="SSF52540">
    <property type="entry name" value="P-loop containing nucleoside triphosphate hydrolases"/>
    <property type="match status" value="1"/>
</dbReference>
<dbReference type="SUPFAM" id="SSF50447">
    <property type="entry name" value="Translation proteins"/>
    <property type="match status" value="1"/>
</dbReference>
<dbReference type="PROSITE" id="PS00301">
    <property type="entry name" value="G_TR_1"/>
    <property type="match status" value="1"/>
</dbReference>
<dbReference type="PROSITE" id="PS51722">
    <property type="entry name" value="G_TR_2"/>
    <property type="match status" value="1"/>
</dbReference>
<proteinExistence type="inferred from homology"/>
<protein>
    <recommendedName>
        <fullName evidence="2">Elongation factor Tu</fullName>
        <shortName evidence="2">EF-Tu</shortName>
        <ecNumber evidence="2">3.6.5.3</ecNumber>
    </recommendedName>
</protein>
<gene>
    <name evidence="2" type="primary">tuf</name>
    <name type="ordered locus">lwe2602</name>
</gene>
<feature type="chain" id="PRO_1000015682" description="Elongation factor Tu">
    <location>
        <begin position="1"/>
        <end position="395"/>
    </location>
</feature>
<feature type="domain" description="tr-type G">
    <location>
        <begin position="10"/>
        <end position="204"/>
    </location>
</feature>
<feature type="region of interest" description="G1" evidence="1">
    <location>
        <begin position="19"/>
        <end position="26"/>
    </location>
</feature>
<feature type="region of interest" description="G2" evidence="1">
    <location>
        <begin position="60"/>
        <end position="64"/>
    </location>
</feature>
<feature type="region of interest" description="G3" evidence="1">
    <location>
        <begin position="81"/>
        <end position="84"/>
    </location>
</feature>
<feature type="region of interest" description="G4" evidence="1">
    <location>
        <begin position="136"/>
        <end position="139"/>
    </location>
</feature>
<feature type="region of interest" description="G5" evidence="1">
    <location>
        <begin position="174"/>
        <end position="176"/>
    </location>
</feature>
<feature type="binding site" evidence="2">
    <location>
        <begin position="19"/>
        <end position="26"/>
    </location>
    <ligand>
        <name>GTP</name>
        <dbReference type="ChEBI" id="CHEBI:37565"/>
    </ligand>
</feature>
<feature type="binding site" evidence="2">
    <location>
        <position position="26"/>
    </location>
    <ligand>
        <name>Mg(2+)</name>
        <dbReference type="ChEBI" id="CHEBI:18420"/>
    </ligand>
</feature>
<feature type="binding site" evidence="2">
    <location>
        <begin position="81"/>
        <end position="85"/>
    </location>
    <ligand>
        <name>GTP</name>
        <dbReference type="ChEBI" id="CHEBI:37565"/>
    </ligand>
</feature>
<feature type="binding site" evidence="2">
    <location>
        <begin position="136"/>
        <end position="139"/>
    </location>
    <ligand>
        <name>GTP</name>
        <dbReference type="ChEBI" id="CHEBI:37565"/>
    </ligand>
</feature>
<organism>
    <name type="scientific">Listeria welshimeri serovar 6b (strain ATCC 35897 / DSM 20650 / CCUG 15529 / CIP 8149 / NCTC 11857 / SLCC 5334 / V8)</name>
    <dbReference type="NCBI Taxonomy" id="386043"/>
    <lineage>
        <taxon>Bacteria</taxon>
        <taxon>Bacillati</taxon>
        <taxon>Bacillota</taxon>
        <taxon>Bacilli</taxon>
        <taxon>Bacillales</taxon>
        <taxon>Listeriaceae</taxon>
        <taxon>Listeria</taxon>
    </lineage>
</organism>